<feature type="chain" id="PRO_0000118619" description="NADH-quinone oxidoreductase subunit D">
    <location>
        <begin position="1"/>
        <end position="401"/>
    </location>
</feature>
<comment type="function">
    <text evidence="1">NDH-1 shuttles electrons from NADH, via FMN and iron-sulfur (Fe-S) centers, to quinones in the respiratory chain. The immediate electron acceptor for the enzyme in this species is believed to be a menaquinone. Couples the redox reaction to proton translocation (for every two electrons transferred, four hydrogen ions are translocated across the cytoplasmic membrane), and thus conserves the redox energy in a proton gradient.</text>
</comment>
<comment type="catalytic activity">
    <reaction evidence="1">
        <text>a quinone + NADH + 5 H(+)(in) = a quinol + NAD(+) + 4 H(+)(out)</text>
        <dbReference type="Rhea" id="RHEA:57888"/>
        <dbReference type="ChEBI" id="CHEBI:15378"/>
        <dbReference type="ChEBI" id="CHEBI:24646"/>
        <dbReference type="ChEBI" id="CHEBI:57540"/>
        <dbReference type="ChEBI" id="CHEBI:57945"/>
        <dbReference type="ChEBI" id="CHEBI:132124"/>
    </reaction>
</comment>
<comment type="subunit">
    <text evidence="1">NDH-1 is composed of 15 different subunits. Subunits NuoB, C, D, E, F, and G constitute the peripheral sector of the complex.</text>
</comment>
<comment type="subcellular location">
    <subcellularLocation>
        <location evidence="1">Cell membrane</location>
        <topology evidence="1">Peripheral membrane protein</topology>
        <orientation evidence="1">Cytoplasmic side</orientation>
    </subcellularLocation>
</comment>
<comment type="similarity">
    <text evidence="1">Belongs to the complex I 49 kDa subunit family.</text>
</comment>
<accession>Q9RU89</accession>
<organism>
    <name type="scientific">Deinococcus radiodurans (strain ATCC 13939 / DSM 20539 / JCM 16871 / CCUG 27074 / LMG 4051 / NBRC 15346 / NCIMB 9279 / VKM B-1422 / R1)</name>
    <dbReference type="NCBI Taxonomy" id="243230"/>
    <lineage>
        <taxon>Bacteria</taxon>
        <taxon>Thermotogati</taxon>
        <taxon>Deinococcota</taxon>
        <taxon>Deinococci</taxon>
        <taxon>Deinococcales</taxon>
        <taxon>Deinococcaceae</taxon>
        <taxon>Deinococcus</taxon>
    </lineage>
</organism>
<proteinExistence type="inferred from homology"/>
<evidence type="ECO:0000255" key="1">
    <source>
        <dbReference type="HAMAP-Rule" id="MF_01358"/>
    </source>
</evidence>
<dbReference type="EC" id="7.1.1.-" evidence="1"/>
<dbReference type="EMBL" id="AE000513">
    <property type="protein sequence ID" value="AAF11069.1"/>
    <property type="molecule type" value="Genomic_DNA"/>
</dbReference>
<dbReference type="PIR" id="A75388">
    <property type="entry name" value="A75388"/>
</dbReference>
<dbReference type="RefSeq" id="NP_295226.1">
    <property type="nucleotide sequence ID" value="NC_001263.1"/>
</dbReference>
<dbReference type="RefSeq" id="WP_010888142.1">
    <property type="nucleotide sequence ID" value="NC_001263.1"/>
</dbReference>
<dbReference type="SMR" id="Q9RU89"/>
<dbReference type="STRING" id="243230.DR_1503"/>
<dbReference type="PaxDb" id="243230-DR_1503"/>
<dbReference type="EnsemblBacteria" id="AAF11069">
    <property type="protein sequence ID" value="AAF11069"/>
    <property type="gene ID" value="DR_1503"/>
</dbReference>
<dbReference type="GeneID" id="69517742"/>
<dbReference type="KEGG" id="dra:DR_1503"/>
<dbReference type="PATRIC" id="fig|243230.17.peg.1706"/>
<dbReference type="eggNOG" id="COG0649">
    <property type="taxonomic scope" value="Bacteria"/>
</dbReference>
<dbReference type="HOGENOM" id="CLU_015134_1_2_0"/>
<dbReference type="InParanoid" id="Q9RU89"/>
<dbReference type="OrthoDB" id="9801496at2"/>
<dbReference type="Proteomes" id="UP000002524">
    <property type="component" value="Chromosome 1"/>
</dbReference>
<dbReference type="GO" id="GO:0005886">
    <property type="term" value="C:plasma membrane"/>
    <property type="evidence" value="ECO:0007669"/>
    <property type="project" value="UniProtKB-SubCell"/>
</dbReference>
<dbReference type="GO" id="GO:0051287">
    <property type="term" value="F:NAD binding"/>
    <property type="evidence" value="ECO:0007669"/>
    <property type="project" value="InterPro"/>
</dbReference>
<dbReference type="GO" id="GO:0050136">
    <property type="term" value="F:NADH:ubiquinone reductase (non-electrogenic) activity"/>
    <property type="evidence" value="ECO:0007669"/>
    <property type="project" value="UniProtKB-UniRule"/>
</dbReference>
<dbReference type="GO" id="GO:0048038">
    <property type="term" value="F:quinone binding"/>
    <property type="evidence" value="ECO:0007669"/>
    <property type="project" value="UniProtKB-KW"/>
</dbReference>
<dbReference type="Gene3D" id="1.10.645.10">
    <property type="entry name" value="Cytochrome-c3 Hydrogenase, chain B"/>
    <property type="match status" value="1"/>
</dbReference>
<dbReference type="HAMAP" id="MF_01358">
    <property type="entry name" value="NDH1_NuoD"/>
    <property type="match status" value="1"/>
</dbReference>
<dbReference type="InterPro" id="IPR001135">
    <property type="entry name" value="NADH_Q_OxRdtase_suD"/>
</dbReference>
<dbReference type="InterPro" id="IPR014029">
    <property type="entry name" value="NADH_UbQ_OxRdtase_49kDa_CS"/>
</dbReference>
<dbReference type="InterPro" id="IPR022885">
    <property type="entry name" value="NDH1_su_D/H"/>
</dbReference>
<dbReference type="InterPro" id="IPR029014">
    <property type="entry name" value="NiFe-Hase_large"/>
</dbReference>
<dbReference type="NCBIfam" id="TIGR01962">
    <property type="entry name" value="NuoD"/>
    <property type="match status" value="1"/>
</dbReference>
<dbReference type="NCBIfam" id="NF004739">
    <property type="entry name" value="PRK06075.1"/>
    <property type="match status" value="1"/>
</dbReference>
<dbReference type="PANTHER" id="PTHR11993:SF10">
    <property type="entry name" value="NADH DEHYDROGENASE [UBIQUINONE] IRON-SULFUR PROTEIN 2, MITOCHONDRIAL"/>
    <property type="match status" value="1"/>
</dbReference>
<dbReference type="PANTHER" id="PTHR11993">
    <property type="entry name" value="NADH-UBIQUINONE OXIDOREDUCTASE 49 KDA SUBUNIT"/>
    <property type="match status" value="1"/>
</dbReference>
<dbReference type="Pfam" id="PF00346">
    <property type="entry name" value="Complex1_49kDa"/>
    <property type="match status" value="1"/>
</dbReference>
<dbReference type="SUPFAM" id="SSF56762">
    <property type="entry name" value="HydB/Nqo4-like"/>
    <property type="match status" value="1"/>
</dbReference>
<dbReference type="PROSITE" id="PS00535">
    <property type="entry name" value="COMPLEX1_49K"/>
    <property type="match status" value="1"/>
</dbReference>
<name>NUOD_DEIRA</name>
<keyword id="KW-1003">Cell membrane</keyword>
<keyword id="KW-0472">Membrane</keyword>
<keyword id="KW-0520">NAD</keyword>
<keyword id="KW-0874">Quinone</keyword>
<keyword id="KW-1185">Reference proteome</keyword>
<keyword id="KW-1278">Translocase</keyword>
<keyword id="KW-0813">Transport</keyword>
<gene>
    <name evidence="1" type="primary">nuoD</name>
    <name type="ordered locus">DR_1503</name>
</gene>
<protein>
    <recommendedName>
        <fullName evidence="1">NADH-quinone oxidoreductase subunit D</fullName>
        <ecNumber evidence="1">7.1.1.-</ecNumber>
    </recommendedName>
    <alternativeName>
        <fullName evidence="1">NADH dehydrogenase I subunit D</fullName>
    </alternativeName>
    <alternativeName>
        <fullName evidence="1">NDH-1 subunit D</fullName>
    </alternativeName>
</protein>
<reference key="1">
    <citation type="journal article" date="1999" name="Science">
        <title>Genome sequence of the radioresistant bacterium Deinococcus radiodurans R1.</title>
        <authorList>
            <person name="White O."/>
            <person name="Eisen J.A."/>
            <person name="Heidelberg J.F."/>
            <person name="Hickey E.K."/>
            <person name="Peterson J.D."/>
            <person name="Dodson R.J."/>
            <person name="Haft D.H."/>
            <person name="Gwinn M.L."/>
            <person name="Nelson W.C."/>
            <person name="Richardson D.L."/>
            <person name="Moffat K.S."/>
            <person name="Qin H."/>
            <person name="Jiang L."/>
            <person name="Pamphile W."/>
            <person name="Crosby M."/>
            <person name="Shen M."/>
            <person name="Vamathevan J.J."/>
            <person name="Lam P."/>
            <person name="McDonald L.A."/>
            <person name="Utterback T.R."/>
            <person name="Zalewski C."/>
            <person name="Makarova K.S."/>
            <person name="Aravind L."/>
            <person name="Daly M.J."/>
            <person name="Minton K.W."/>
            <person name="Fleischmann R.D."/>
            <person name="Ketchum K.A."/>
            <person name="Nelson K.E."/>
            <person name="Salzberg S.L."/>
            <person name="Smith H.O."/>
            <person name="Venter J.C."/>
            <person name="Fraser C.M."/>
        </authorList>
    </citation>
    <scope>NUCLEOTIDE SEQUENCE [LARGE SCALE GENOMIC DNA]</scope>
    <source>
        <strain>ATCC 13939 / DSM 20539 / JCM 16871 / CCUG 27074 / LMG 4051 / NBRC 15346 / NCIMB 9279 / VKM B-1422 / R1</strain>
    </source>
</reference>
<sequence length="401" mass="44737">MTAELQPEAGALLHTELMSLNVGPQHPSTHGVLRLVVDMDGEYVTRVEPHMGYLHTGFEKTMEHRTYQQNVTYAPRTDYLHSFSHELAYVLSVEKLLGAEVPERANVVRVILHELGRIHSHLVFVGTGLLDLGALTPFFYAFREKEACQDLFEAVCGYRMNQGYFRVGGLARDLPEGWTARVEAFLNQMERGVEEYTTLFAANPIFLDRAKGVGVIPADAALDLGLTGPNLRASGVPLDNRKDHPYCGFEDYDFNVISSPDGDSLARFNMRLLEFSESIKIIRQGLQKLRPGPIKDPNRKISLPPRHELETSMEAVIHHFKLVTEGFHPPLGEAYVPIESARGEVGYYVISDGGSMPYRVKIRAPSFVNLQALEYACVGVQFADLITILATIDPVLGDVDR</sequence>